<organism>
    <name type="scientific">Allorhizobium ampelinum (strain ATCC BAA-846 / DSM 112012 / S4)</name>
    <name type="common">Agrobacterium vitis (strain S4)</name>
    <dbReference type="NCBI Taxonomy" id="311402"/>
    <lineage>
        <taxon>Bacteria</taxon>
        <taxon>Pseudomonadati</taxon>
        <taxon>Pseudomonadota</taxon>
        <taxon>Alphaproteobacteria</taxon>
        <taxon>Hyphomicrobiales</taxon>
        <taxon>Rhizobiaceae</taxon>
        <taxon>Rhizobium/Agrobacterium group</taxon>
        <taxon>Allorhizobium</taxon>
        <taxon>Allorhizobium ampelinum</taxon>
    </lineage>
</organism>
<protein>
    <recommendedName>
        <fullName evidence="1">Holliday junction branch migration complex subunit RuvA</fullName>
    </recommendedName>
</protein>
<feature type="chain" id="PRO_1000195107" description="Holliday junction branch migration complex subunit RuvA">
    <location>
        <begin position="1"/>
        <end position="205"/>
    </location>
</feature>
<feature type="region of interest" description="Domain I" evidence="1">
    <location>
        <begin position="1"/>
        <end position="64"/>
    </location>
</feature>
<feature type="region of interest" description="Domain II" evidence="1">
    <location>
        <begin position="65"/>
        <end position="143"/>
    </location>
</feature>
<feature type="region of interest" description="Flexible linker" evidence="1">
    <location>
        <begin position="144"/>
        <end position="153"/>
    </location>
</feature>
<feature type="region of interest" description="Domain III" evidence="1">
    <location>
        <begin position="153"/>
        <end position="205"/>
    </location>
</feature>
<accession>B9JRI6</accession>
<sequence>MIGKLKGTIDEIGDDHVLVDVHGVCYVAHCSSRTLARLGSPGEAIVLFIETYVREDQLKLFGFMSALEREWFNLLQSVQGVGAKVALAILATLTPSELANAIALQDKPAIARAPGVGPKVALRLVTELKNKAPAFTGDAGSAIGLKQELGEGVASAPVSDAVSALTNLGYSRDQAANAIAAALKNGGEGADSAKLIRLGLKELSR</sequence>
<keyword id="KW-0963">Cytoplasm</keyword>
<keyword id="KW-0227">DNA damage</keyword>
<keyword id="KW-0233">DNA recombination</keyword>
<keyword id="KW-0234">DNA repair</keyword>
<keyword id="KW-0238">DNA-binding</keyword>
<keyword id="KW-1185">Reference proteome</keyword>
<dbReference type="EMBL" id="CP000633">
    <property type="protein sequence ID" value="ACM37597.1"/>
    <property type="molecule type" value="Genomic_DNA"/>
</dbReference>
<dbReference type="RefSeq" id="WP_015917010.1">
    <property type="nucleotide sequence ID" value="NC_011989.1"/>
</dbReference>
<dbReference type="SMR" id="B9JRI6"/>
<dbReference type="STRING" id="311402.Avi_3605"/>
<dbReference type="KEGG" id="avi:Avi_3605"/>
<dbReference type="eggNOG" id="COG0632">
    <property type="taxonomic scope" value="Bacteria"/>
</dbReference>
<dbReference type="HOGENOM" id="CLU_087936_3_0_5"/>
<dbReference type="Proteomes" id="UP000001596">
    <property type="component" value="Chromosome 1"/>
</dbReference>
<dbReference type="GO" id="GO:0005737">
    <property type="term" value="C:cytoplasm"/>
    <property type="evidence" value="ECO:0007669"/>
    <property type="project" value="UniProtKB-SubCell"/>
</dbReference>
<dbReference type="GO" id="GO:0009379">
    <property type="term" value="C:Holliday junction helicase complex"/>
    <property type="evidence" value="ECO:0007669"/>
    <property type="project" value="InterPro"/>
</dbReference>
<dbReference type="GO" id="GO:0048476">
    <property type="term" value="C:Holliday junction resolvase complex"/>
    <property type="evidence" value="ECO:0007669"/>
    <property type="project" value="UniProtKB-UniRule"/>
</dbReference>
<dbReference type="GO" id="GO:0005524">
    <property type="term" value="F:ATP binding"/>
    <property type="evidence" value="ECO:0007669"/>
    <property type="project" value="InterPro"/>
</dbReference>
<dbReference type="GO" id="GO:0000400">
    <property type="term" value="F:four-way junction DNA binding"/>
    <property type="evidence" value="ECO:0007669"/>
    <property type="project" value="UniProtKB-UniRule"/>
</dbReference>
<dbReference type="GO" id="GO:0009378">
    <property type="term" value="F:four-way junction helicase activity"/>
    <property type="evidence" value="ECO:0007669"/>
    <property type="project" value="InterPro"/>
</dbReference>
<dbReference type="GO" id="GO:0006310">
    <property type="term" value="P:DNA recombination"/>
    <property type="evidence" value="ECO:0007669"/>
    <property type="project" value="UniProtKB-UniRule"/>
</dbReference>
<dbReference type="GO" id="GO:0006281">
    <property type="term" value="P:DNA repair"/>
    <property type="evidence" value="ECO:0007669"/>
    <property type="project" value="UniProtKB-UniRule"/>
</dbReference>
<dbReference type="CDD" id="cd14332">
    <property type="entry name" value="UBA_RuvA_C"/>
    <property type="match status" value="1"/>
</dbReference>
<dbReference type="Gene3D" id="1.10.150.20">
    <property type="entry name" value="5' to 3' exonuclease, C-terminal subdomain"/>
    <property type="match status" value="1"/>
</dbReference>
<dbReference type="Gene3D" id="1.10.8.10">
    <property type="entry name" value="DNA helicase RuvA subunit, C-terminal domain"/>
    <property type="match status" value="1"/>
</dbReference>
<dbReference type="Gene3D" id="2.40.50.140">
    <property type="entry name" value="Nucleic acid-binding proteins"/>
    <property type="match status" value="1"/>
</dbReference>
<dbReference type="HAMAP" id="MF_00031">
    <property type="entry name" value="DNA_HJ_migration_RuvA"/>
    <property type="match status" value="1"/>
</dbReference>
<dbReference type="InterPro" id="IPR013849">
    <property type="entry name" value="DNA_helicase_Holl-junc_RuvA_I"/>
</dbReference>
<dbReference type="InterPro" id="IPR003583">
    <property type="entry name" value="Hlx-hairpin-Hlx_DNA-bd_motif"/>
</dbReference>
<dbReference type="InterPro" id="IPR012340">
    <property type="entry name" value="NA-bd_OB-fold"/>
</dbReference>
<dbReference type="InterPro" id="IPR000085">
    <property type="entry name" value="RuvA"/>
</dbReference>
<dbReference type="InterPro" id="IPR010994">
    <property type="entry name" value="RuvA_2-like"/>
</dbReference>
<dbReference type="InterPro" id="IPR011114">
    <property type="entry name" value="RuvA_C"/>
</dbReference>
<dbReference type="InterPro" id="IPR036267">
    <property type="entry name" value="RuvA_C_sf"/>
</dbReference>
<dbReference type="NCBIfam" id="TIGR00084">
    <property type="entry name" value="ruvA"/>
    <property type="match status" value="1"/>
</dbReference>
<dbReference type="Pfam" id="PF14520">
    <property type="entry name" value="HHH_5"/>
    <property type="match status" value="1"/>
</dbReference>
<dbReference type="Pfam" id="PF07499">
    <property type="entry name" value="RuvA_C"/>
    <property type="match status" value="1"/>
</dbReference>
<dbReference type="Pfam" id="PF01330">
    <property type="entry name" value="RuvA_N"/>
    <property type="match status" value="1"/>
</dbReference>
<dbReference type="SMART" id="SM00278">
    <property type="entry name" value="HhH1"/>
    <property type="match status" value="2"/>
</dbReference>
<dbReference type="SUPFAM" id="SSF46929">
    <property type="entry name" value="DNA helicase RuvA subunit, C-terminal domain"/>
    <property type="match status" value="1"/>
</dbReference>
<dbReference type="SUPFAM" id="SSF50249">
    <property type="entry name" value="Nucleic acid-binding proteins"/>
    <property type="match status" value="1"/>
</dbReference>
<dbReference type="SUPFAM" id="SSF47781">
    <property type="entry name" value="RuvA domain 2-like"/>
    <property type="match status" value="1"/>
</dbReference>
<comment type="function">
    <text evidence="1">The RuvA-RuvB-RuvC complex processes Holliday junction (HJ) DNA during genetic recombination and DNA repair, while the RuvA-RuvB complex plays an important role in the rescue of blocked DNA replication forks via replication fork reversal (RFR). RuvA specifically binds to HJ cruciform DNA, conferring on it an open structure. The RuvB hexamer acts as an ATP-dependent pump, pulling dsDNA into and through the RuvAB complex. HJ branch migration allows RuvC to scan DNA until it finds its consensus sequence, where it cleaves and resolves the cruciform DNA.</text>
</comment>
<comment type="subunit">
    <text evidence="1">Homotetramer. Forms an RuvA(8)-RuvB(12)-Holliday junction (HJ) complex. HJ DNA is sandwiched between 2 RuvA tetramers; dsDNA enters through RuvA and exits via RuvB. An RuvB hexamer assembles on each DNA strand where it exits the tetramer. Each RuvB hexamer is contacted by two RuvA subunits (via domain III) on 2 adjacent RuvB subunits; this complex drives branch migration. In the full resolvosome a probable DNA-RuvA(4)-RuvB(12)-RuvC(2) complex forms which resolves the HJ.</text>
</comment>
<comment type="subcellular location">
    <subcellularLocation>
        <location evidence="1">Cytoplasm</location>
    </subcellularLocation>
</comment>
<comment type="domain">
    <text evidence="1">Has three domains with a flexible linker between the domains II and III and assumes an 'L' shape. Domain III is highly mobile and contacts RuvB.</text>
</comment>
<comment type="similarity">
    <text evidence="1">Belongs to the RuvA family.</text>
</comment>
<name>RUVA_ALLAM</name>
<proteinExistence type="inferred from homology"/>
<reference key="1">
    <citation type="journal article" date="2009" name="J. Bacteriol.">
        <title>Genome sequences of three Agrobacterium biovars help elucidate the evolution of multichromosome genomes in bacteria.</title>
        <authorList>
            <person name="Slater S.C."/>
            <person name="Goldman B.S."/>
            <person name="Goodner B."/>
            <person name="Setubal J.C."/>
            <person name="Farrand S.K."/>
            <person name="Nester E.W."/>
            <person name="Burr T.J."/>
            <person name="Banta L."/>
            <person name="Dickerman A.W."/>
            <person name="Paulsen I."/>
            <person name="Otten L."/>
            <person name="Suen G."/>
            <person name="Welch R."/>
            <person name="Almeida N.F."/>
            <person name="Arnold F."/>
            <person name="Burton O.T."/>
            <person name="Du Z."/>
            <person name="Ewing A."/>
            <person name="Godsy E."/>
            <person name="Heisel S."/>
            <person name="Houmiel K.L."/>
            <person name="Jhaveri J."/>
            <person name="Lu J."/>
            <person name="Miller N.M."/>
            <person name="Norton S."/>
            <person name="Chen Q."/>
            <person name="Phoolcharoen W."/>
            <person name="Ohlin V."/>
            <person name="Ondrusek D."/>
            <person name="Pride N."/>
            <person name="Stricklin S.L."/>
            <person name="Sun J."/>
            <person name="Wheeler C."/>
            <person name="Wilson L."/>
            <person name="Zhu H."/>
            <person name="Wood D.W."/>
        </authorList>
    </citation>
    <scope>NUCLEOTIDE SEQUENCE [LARGE SCALE GENOMIC DNA]</scope>
    <source>
        <strain>ATCC BAA-846 / DSM 112012 / S4</strain>
    </source>
</reference>
<gene>
    <name evidence="1" type="primary">ruvA</name>
    <name type="ordered locus">Avi_3605</name>
</gene>
<evidence type="ECO:0000255" key="1">
    <source>
        <dbReference type="HAMAP-Rule" id="MF_00031"/>
    </source>
</evidence>